<gene>
    <name evidence="1" type="primary">dapB</name>
    <name type="ordered locus">ETA_07160</name>
</gene>
<comment type="function">
    <text evidence="1">Catalyzes the conversion of 4-hydroxy-tetrahydrodipicolinate (HTPA) to tetrahydrodipicolinate.</text>
</comment>
<comment type="catalytic activity">
    <reaction evidence="1">
        <text>(S)-2,3,4,5-tetrahydrodipicolinate + NAD(+) + H2O = (2S,4S)-4-hydroxy-2,3,4,5-tetrahydrodipicolinate + NADH + H(+)</text>
        <dbReference type="Rhea" id="RHEA:35323"/>
        <dbReference type="ChEBI" id="CHEBI:15377"/>
        <dbReference type="ChEBI" id="CHEBI:15378"/>
        <dbReference type="ChEBI" id="CHEBI:16845"/>
        <dbReference type="ChEBI" id="CHEBI:57540"/>
        <dbReference type="ChEBI" id="CHEBI:57945"/>
        <dbReference type="ChEBI" id="CHEBI:67139"/>
        <dbReference type="EC" id="1.17.1.8"/>
    </reaction>
</comment>
<comment type="catalytic activity">
    <reaction evidence="1">
        <text>(S)-2,3,4,5-tetrahydrodipicolinate + NADP(+) + H2O = (2S,4S)-4-hydroxy-2,3,4,5-tetrahydrodipicolinate + NADPH + H(+)</text>
        <dbReference type="Rhea" id="RHEA:35331"/>
        <dbReference type="ChEBI" id="CHEBI:15377"/>
        <dbReference type="ChEBI" id="CHEBI:15378"/>
        <dbReference type="ChEBI" id="CHEBI:16845"/>
        <dbReference type="ChEBI" id="CHEBI:57783"/>
        <dbReference type="ChEBI" id="CHEBI:58349"/>
        <dbReference type="ChEBI" id="CHEBI:67139"/>
        <dbReference type="EC" id="1.17.1.8"/>
    </reaction>
</comment>
<comment type="pathway">
    <text evidence="1">Amino-acid biosynthesis; L-lysine biosynthesis via DAP pathway; (S)-tetrahydrodipicolinate from L-aspartate: step 4/4.</text>
</comment>
<comment type="subunit">
    <text evidence="1">Homotetramer.</text>
</comment>
<comment type="subcellular location">
    <subcellularLocation>
        <location evidence="1">Cytoplasm</location>
    </subcellularLocation>
</comment>
<comment type="similarity">
    <text evidence="1">Belongs to the DapB family.</text>
</comment>
<comment type="caution">
    <text evidence="2">Was originally thought to be a dihydrodipicolinate reductase (DHDPR), catalyzing the conversion of dihydrodipicolinate to tetrahydrodipicolinate. However, it was shown in E.coli that the substrate of the enzymatic reaction is not dihydrodipicolinate (DHDP) but in fact (2S,4S)-4-hydroxy-2,3,4,5-tetrahydrodipicolinic acid (HTPA), the product released by the DapA-catalyzed reaction.</text>
</comment>
<evidence type="ECO:0000255" key="1">
    <source>
        <dbReference type="HAMAP-Rule" id="MF_00102"/>
    </source>
</evidence>
<evidence type="ECO:0000305" key="2"/>
<sequence length="273" mass="28916">MSNAEIRIAIVGAAGRMGRQLIQAVVLAEGARLGAALVRSGSSLVGTDAGELAGCGALGITLTDDLEAVANDFDVLIDFTRPEGTLHYLAFCRQHHKAMVIGTTGFDDAGKAAIEAAAQDIAIVFAANFSVGVNVVLKLVEKAAKVMGEYADIEIIEAHHRHKVDAPSGTALAMGEAIADAMSWDLKQHAVYAREGFTGEREAQTIGFATVRAGDIVGEHTAMFADIGERVEISHKASSRMTFAKGAVRAAIWLDGRKKGLYDMRCVLNLHDL</sequence>
<organism>
    <name type="scientific">Erwinia tasmaniensis (strain DSM 17950 / CFBP 7177 / CIP 109463 / NCPPB 4357 / Et1/99)</name>
    <dbReference type="NCBI Taxonomy" id="465817"/>
    <lineage>
        <taxon>Bacteria</taxon>
        <taxon>Pseudomonadati</taxon>
        <taxon>Pseudomonadota</taxon>
        <taxon>Gammaproteobacteria</taxon>
        <taxon>Enterobacterales</taxon>
        <taxon>Erwiniaceae</taxon>
        <taxon>Erwinia</taxon>
    </lineage>
</organism>
<reference key="1">
    <citation type="journal article" date="2008" name="Environ. Microbiol.">
        <title>The genome of Erwinia tasmaniensis strain Et1/99, a non-pathogenic bacterium in the genus Erwinia.</title>
        <authorList>
            <person name="Kube M."/>
            <person name="Migdoll A.M."/>
            <person name="Mueller I."/>
            <person name="Kuhl H."/>
            <person name="Beck A."/>
            <person name="Reinhardt R."/>
            <person name="Geider K."/>
        </authorList>
    </citation>
    <scope>NUCLEOTIDE SEQUENCE [LARGE SCALE GENOMIC DNA]</scope>
    <source>
        <strain>DSM 17950 / CFBP 7177 / CIP 109463 / NCPPB 4357 / Et1/99</strain>
    </source>
</reference>
<proteinExistence type="inferred from homology"/>
<feature type="chain" id="PRO_1000093969" description="4-hydroxy-tetrahydrodipicolinate reductase">
    <location>
        <begin position="1"/>
        <end position="273"/>
    </location>
</feature>
<feature type="active site" description="Proton donor/acceptor" evidence="1">
    <location>
        <position position="159"/>
    </location>
</feature>
<feature type="active site" description="Proton donor" evidence="1">
    <location>
        <position position="163"/>
    </location>
</feature>
<feature type="binding site" evidence="1">
    <location>
        <begin position="12"/>
        <end position="17"/>
    </location>
    <ligand>
        <name>NAD(+)</name>
        <dbReference type="ChEBI" id="CHEBI:57540"/>
    </ligand>
</feature>
<feature type="binding site" evidence="1">
    <location>
        <position position="39"/>
    </location>
    <ligand>
        <name>NADP(+)</name>
        <dbReference type="ChEBI" id="CHEBI:58349"/>
    </ligand>
</feature>
<feature type="binding site" evidence="1">
    <location>
        <begin position="102"/>
        <end position="104"/>
    </location>
    <ligand>
        <name>NAD(+)</name>
        <dbReference type="ChEBI" id="CHEBI:57540"/>
    </ligand>
</feature>
<feature type="binding site" evidence="1">
    <location>
        <begin position="126"/>
        <end position="129"/>
    </location>
    <ligand>
        <name>NAD(+)</name>
        <dbReference type="ChEBI" id="CHEBI:57540"/>
    </ligand>
</feature>
<feature type="binding site" evidence="1">
    <location>
        <position position="160"/>
    </location>
    <ligand>
        <name>(S)-2,3,4,5-tetrahydrodipicolinate</name>
        <dbReference type="ChEBI" id="CHEBI:16845"/>
    </ligand>
</feature>
<feature type="binding site" evidence="1">
    <location>
        <begin position="169"/>
        <end position="170"/>
    </location>
    <ligand>
        <name>(S)-2,3,4,5-tetrahydrodipicolinate</name>
        <dbReference type="ChEBI" id="CHEBI:16845"/>
    </ligand>
</feature>
<accession>B2VH06</accession>
<name>DAPB_ERWT9</name>
<protein>
    <recommendedName>
        <fullName evidence="1">4-hydroxy-tetrahydrodipicolinate reductase</fullName>
        <shortName evidence="1">HTPA reductase</shortName>
        <ecNumber evidence="1">1.17.1.8</ecNumber>
    </recommendedName>
</protein>
<keyword id="KW-0028">Amino-acid biosynthesis</keyword>
<keyword id="KW-0963">Cytoplasm</keyword>
<keyword id="KW-0220">Diaminopimelate biosynthesis</keyword>
<keyword id="KW-0457">Lysine biosynthesis</keyword>
<keyword id="KW-0520">NAD</keyword>
<keyword id="KW-0521">NADP</keyword>
<keyword id="KW-0560">Oxidoreductase</keyword>
<keyword id="KW-1185">Reference proteome</keyword>
<dbReference type="EC" id="1.17.1.8" evidence="1"/>
<dbReference type="EMBL" id="CU468135">
    <property type="protein sequence ID" value="CAO95762.1"/>
    <property type="molecule type" value="Genomic_DNA"/>
</dbReference>
<dbReference type="RefSeq" id="WP_012440464.1">
    <property type="nucleotide sequence ID" value="NC_010694.1"/>
</dbReference>
<dbReference type="SMR" id="B2VH06"/>
<dbReference type="STRING" id="465817.ETA_07160"/>
<dbReference type="KEGG" id="eta:ETA_07160"/>
<dbReference type="eggNOG" id="COG0289">
    <property type="taxonomic scope" value="Bacteria"/>
</dbReference>
<dbReference type="HOGENOM" id="CLU_047479_2_1_6"/>
<dbReference type="OrthoDB" id="9790352at2"/>
<dbReference type="UniPathway" id="UPA00034">
    <property type="reaction ID" value="UER00018"/>
</dbReference>
<dbReference type="Proteomes" id="UP000001726">
    <property type="component" value="Chromosome"/>
</dbReference>
<dbReference type="GO" id="GO:0005829">
    <property type="term" value="C:cytosol"/>
    <property type="evidence" value="ECO:0007669"/>
    <property type="project" value="TreeGrafter"/>
</dbReference>
<dbReference type="GO" id="GO:0008839">
    <property type="term" value="F:4-hydroxy-tetrahydrodipicolinate reductase"/>
    <property type="evidence" value="ECO:0007669"/>
    <property type="project" value="UniProtKB-EC"/>
</dbReference>
<dbReference type="GO" id="GO:0051287">
    <property type="term" value="F:NAD binding"/>
    <property type="evidence" value="ECO:0007669"/>
    <property type="project" value="UniProtKB-UniRule"/>
</dbReference>
<dbReference type="GO" id="GO:0050661">
    <property type="term" value="F:NADP binding"/>
    <property type="evidence" value="ECO:0007669"/>
    <property type="project" value="UniProtKB-UniRule"/>
</dbReference>
<dbReference type="GO" id="GO:0016726">
    <property type="term" value="F:oxidoreductase activity, acting on CH or CH2 groups, NAD or NADP as acceptor"/>
    <property type="evidence" value="ECO:0007669"/>
    <property type="project" value="UniProtKB-UniRule"/>
</dbReference>
<dbReference type="GO" id="GO:0019877">
    <property type="term" value="P:diaminopimelate biosynthetic process"/>
    <property type="evidence" value="ECO:0007669"/>
    <property type="project" value="UniProtKB-UniRule"/>
</dbReference>
<dbReference type="GO" id="GO:0009089">
    <property type="term" value="P:lysine biosynthetic process via diaminopimelate"/>
    <property type="evidence" value="ECO:0007669"/>
    <property type="project" value="UniProtKB-UniRule"/>
</dbReference>
<dbReference type="CDD" id="cd02274">
    <property type="entry name" value="DHDPR_N"/>
    <property type="match status" value="1"/>
</dbReference>
<dbReference type="FunFam" id="3.30.360.10:FF:000004">
    <property type="entry name" value="4-hydroxy-tetrahydrodipicolinate reductase"/>
    <property type="match status" value="1"/>
</dbReference>
<dbReference type="FunFam" id="3.40.50.720:FF:000048">
    <property type="entry name" value="4-hydroxy-tetrahydrodipicolinate reductase"/>
    <property type="match status" value="1"/>
</dbReference>
<dbReference type="Gene3D" id="3.30.360.10">
    <property type="entry name" value="Dihydrodipicolinate Reductase, domain 2"/>
    <property type="match status" value="1"/>
</dbReference>
<dbReference type="Gene3D" id="3.40.50.720">
    <property type="entry name" value="NAD(P)-binding Rossmann-like Domain"/>
    <property type="match status" value="1"/>
</dbReference>
<dbReference type="HAMAP" id="MF_00102">
    <property type="entry name" value="DapB"/>
    <property type="match status" value="1"/>
</dbReference>
<dbReference type="InterPro" id="IPR022663">
    <property type="entry name" value="DapB_C"/>
</dbReference>
<dbReference type="InterPro" id="IPR000846">
    <property type="entry name" value="DapB_N"/>
</dbReference>
<dbReference type="InterPro" id="IPR022664">
    <property type="entry name" value="DapB_N_CS"/>
</dbReference>
<dbReference type="InterPro" id="IPR023940">
    <property type="entry name" value="DHDPR_bac"/>
</dbReference>
<dbReference type="InterPro" id="IPR036291">
    <property type="entry name" value="NAD(P)-bd_dom_sf"/>
</dbReference>
<dbReference type="NCBIfam" id="TIGR00036">
    <property type="entry name" value="dapB"/>
    <property type="match status" value="1"/>
</dbReference>
<dbReference type="PANTHER" id="PTHR20836:SF0">
    <property type="entry name" value="4-HYDROXY-TETRAHYDRODIPICOLINATE REDUCTASE 1, CHLOROPLASTIC-RELATED"/>
    <property type="match status" value="1"/>
</dbReference>
<dbReference type="PANTHER" id="PTHR20836">
    <property type="entry name" value="DIHYDRODIPICOLINATE REDUCTASE"/>
    <property type="match status" value="1"/>
</dbReference>
<dbReference type="Pfam" id="PF05173">
    <property type="entry name" value="DapB_C"/>
    <property type="match status" value="1"/>
</dbReference>
<dbReference type="Pfam" id="PF01113">
    <property type="entry name" value="DapB_N"/>
    <property type="match status" value="1"/>
</dbReference>
<dbReference type="PIRSF" id="PIRSF000161">
    <property type="entry name" value="DHPR"/>
    <property type="match status" value="1"/>
</dbReference>
<dbReference type="SUPFAM" id="SSF55347">
    <property type="entry name" value="Glyceraldehyde-3-phosphate dehydrogenase-like, C-terminal domain"/>
    <property type="match status" value="1"/>
</dbReference>
<dbReference type="SUPFAM" id="SSF51735">
    <property type="entry name" value="NAD(P)-binding Rossmann-fold domains"/>
    <property type="match status" value="1"/>
</dbReference>
<dbReference type="PROSITE" id="PS01298">
    <property type="entry name" value="DAPB"/>
    <property type="match status" value="1"/>
</dbReference>